<protein>
    <recommendedName>
        <fullName>Pentatricopeptide repeat-containing protein At1g02150</fullName>
    </recommendedName>
</protein>
<reference key="1">
    <citation type="journal article" date="2000" name="Nature">
        <title>Sequence and analysis of chromosome 1 of the plant Arabidopsis thaliana.</title>
        <authorList>
            <person name="Theologis A."/>
            <person name="Ecker J.R."/>
            <person name="Palm C.J."/>
            <person name="Federspiel N.A."/>
            <person name="Kaul S."/>
            <person name="White O."/>
            <person name="Alonso J."/>
            <person name="Altafi H."/>
            <person name="Araujo R."/>
            <person name="Bowman C.L."/>
            <person name="Brooks S.Y."/>
            <person name="Buehler E."/>
            <person name="Chan A."/>
            <person name="Chao Q."/>
            <person name="Chen H."/>
            <person name="Cheuk R.F."/>
            <person name="Chin C.W."/>
            <person name="Chung M.K."/>
            <person name="Conn L."/>
            <person name="Conway A.B."/>
            <person name="Conway A.R."/>
            <person name="Creasy T.H."/>
            <person name="Dewar K."/>
            <person name="Dunn P."/>
            <person name="Etgu P."/>
            <person name="Feldblyum T.V."/>
            <person name="Feng J.-D."/>
            <person name="Fong B."/>
            <person name="Fujii C.Y."/>
            <person name="Gill J.E."/>
            <person name="Goldsmith A.D."/>
            <person name="Haas B."/>
            <person name="Hansen N.F."/>
            <person name="Hughes B."/>
            <person name="Huizar L."/>
            <person name="Hunter J.L."/>
            <person name="Jenkins J."/>
            <person name="Johnson-Hopson C."/>
            <person name="Khan S."/>
            <person name="Khaykin E."/>
            <person name="Kim C.J."/>
            <person name="Koo H.L."/>
            <person name="Kremenetskaia I."/>
            <person name="Kurtz D.B."/>
            <person name="Kwan A."/>
            <person name="Lam B."/>
            <person name="Langin-Hooper S."/>
            <person name="Lee A."/>
            <person name="Lee J.M."/>
            <person name="Lenz C.A."/>
            <person name="Li J.H."/>
            <person name="Li Y.-P."/>
            <person name="Lin X."/>
            <person name="Liu S.X."/>
            <person name="Liu Z.A."/>
            <person name="Luros J.S."/>
            <person name="Maiti R."/>
            <person name="Marziali A."/>
            <person name="Militscher J."/>
            <person name="Miranda M."/>
            <person name="Nguyen M."/>
            <person name="Nierman W.C."/>
            <person name="Osborne B.I."/>
            <person name="Pai G."/>
            <person name="Peterson J."/>
            <person name="Pham P.K."/>
            <person name="Rizzo M."/>
            <person name="Rooney T."/>
            <person name="Rowley D."/>
            <person name="Sakano H."/>
            <person name="Salzberg S.L."/>
            <person name="Schwartz J.R."/>
            <person name="Shinn P."/>
            <person name="Southwick A.M."/>
            <person name="Sun H."/>
            <person name="Tallon L.J."/>
            <person name="Tambunga G."/>
            <person name="Toriumi M.J."/>
            <person name="Town C.D."/>
            <person name="Utterback T."/>
            <person name="Van Aken S."/>
            <person name="Vaysberg M."/>
            <person name="Vysotskaia V.S."/>
            <person name="Walker M."/>
            <person name="Wu D."/>
            <person name="Yu G."/>
            <person name="Fraser C.M."/>
            <person name="Venter J.C."/>
            <person name="Davis R.W."/>
        </authorList>
    </citation>
    <scope>NUCLEOTIDE SEQUENCE [LARGE SCALE GENOMIC DNA]</scope>
    <source>
        <strain>cv. Columbia</strain>
    </source>
</reference>
<reference key="2">
    <citation type="journal article" date="2017" name="Plant J.">
        <title>Araport11: a complete reannotation of the Arabidopsis thaliana reference genome.</title>
        <authorList>
            <person name="Cheng C.Y."/>
            <person name="Krishnakumar V."/>
            <person name="Chan A.P."/>
            <person name="Thibaud-Nissen F."/>
            <person name="Schobel S."/>
            <person name="Town C.D."/>
        </authorList>
    </citation>
    <scope>GENOME REANNOTATION</scope>
    <source>
        <strain>cv. Columbia</strain>
    </source>
</reference>
<reference key="3">
    <citation type="journal article" date="2003" name="Science">
        <title>Empirical analysis of transcriptional activity in the Arabidopsis genome.</title>
        <authorList>
            <person name="Yamada K."/>
            <person name="Lim J."/>
            <person name="Dale J.M."/>
            <person name="Chen H."/>
            <person name="Shinn P."/>
            <person name="Palm C.J."/>
            <person name="Southwick A.M."/>
            <person name="Wu H.C."/>
            <person name="Kim C.J."/>
            <person name="Nguyen M."/>
            <person name="Pham P.K."/>
            <person name="Cheuk R.F."/>
            <person name="Karlin-Newmann G."/>
            <person name="Liu S.X."/>
            <person name="Lam B."/>
            <person name="Sakano H."/>
            <person name="Wu T."/>
            <person name="Yu G."/>
            <person name="Miranda M."/>
            <person name="Quach H.L."/>
            <person name="Tripp M."/>
            <person name="Chang C.H."/>
            <person name="Lee J.M."/>
            <person name="Toriumi M.J."/>
            <person name="Chan M.M."/>
            <person name="Tang C.C."/>
            <person name="Onodera C.S."/>
            <person name="Deng J.M."/>
            <person name="Akiyama K."/>
            <person name="Ansari Y."/>
            <person name="Arakawa T."/>
            <person name="Banh J."/>
            <person name="Banno F."/>
            <person name="Bowser L."/>
            <person name="Brooks S.Y."/>
            <person name="Carninci P."/>
            <person name="Chao Q."/>
            <person name="Choy N."/>
            <person name="Enju A."/>
            <person name="Goldsmith A.D."/>
            <person name="Gurjal M."/>
            <person name="Hansen N.F."/>
            <person name="Hayashizaki Y."/>
            <person name="Johnson-Hopson C."/>
            <person name="Hsuan V.W."/>
            <person name="Iida K."/>
            <person name="Karnes M."/>
            <person name="Khan S."/>
            <person name="Koesema E."/>
            <person name="Ishida J."/>
            <person name="Jiang P.X."/>
            <person name="Jones T."/>
            <person name="Kawai J."/>
            <person name="Kamiya A."/>
            <person name="Meyers C."/>
            <person name="Nakajima M."/>
            <person name="Narusaka M."/>
            <person name="Seki M."/>
            <person name="Sakurai T."/>
            <person name="Satou M."/>
            <person name="Tamse R."/>
            <person name="Vaysberg M."/>
            <person name="Wallender E.K."/>
            <person name="Wong C."/>
            <person name="Yamamura Y."/>
            <person name="Yuan S."/>
            <person name="Shinozaki K."/>
            <person name="Davis R.W."/>
            <person name="Theologis A."/>
            <person name="Ecker J.R."/>
        </authorList>
    </citation>
    <scope>NUCLEOTIDE SEQUENCE [LARGE SCALE MRNA]</scope>
    <source>
        <strain>cv. Columbia</strain>
    </source>
</reference>
<reference key="4">
    <citation type="journal article" date="2004" name="Plant Cell">
        <title>Genome-wide analysis of Arabidopsis pentatricopeptide repeat proteins reveals their essential role in organelle biogenesis.</title>
        <authorList>
            <person name="Lurin C."/>
            <person name="Andres C."/>
            <person name="Aubourg S."/>
            <person name="Bellaoui M."/>
            <person name="Bitton F."/>
            <person name="Bruyere C."/>
            <person name="Caboche M."/>
            <person name="Debast C."/>
            <person name="Gualberto J."/>
            <person name="Hoffmann B."/>
            <person name="Lecharny A."/>
            <person name="Le Ret M."/>
            <person name="Martin-Magniette M.-L."/>
            <person name="Mireau H."/>
            <person name="Peeters N."/>
            <person name="Renou J.-P."/>
            <person name="Szurek B."/>
            <person name="Taconnat L."/>
            <person name="Small I."/>
        </authorList>
    </citation>
    <scope>GENE FAMILY</scope>
</reference>
<organism>
    <name type="scientific">Arabidopsis thaliana</name>
    <name type="common">Mouse-ear cress</name>
    <dbReference type="NCBI Taxonomy" id="3702"/>
    <lineage>
        <taxon>Eukaryota</taxon>
        <taxon>Viridiplantae</taxon>
        <taxon>Streptophyta</taxon>
        <taxon>Embryophyta</taxon>
        <taxon>Tracheophyta</taxon>
        <taxon>Spermatophyta</taxon>
        <taxon>Magnoliopsida</taxon>
        <taxon>eudicotyledons</taxon>
        <taxon>Gunneridae</taxon>
        <taxon>Pentapetalae</taxon>
        <taxon>rosids</taxon>
        <taxon>malvids</taxon>
        <taxon>Brassicales</taxon>
        <taxon>Brassicaceae</taxon>
        <taxon>Camelineae</taxon>
        <taxon>Arabidopsis</taxon>
    </lineage>
</organism>
<sequence>MLLQAAVQNRNVPLASSASYSRLLRCRSPVVSVAALSKKTAAIVCSISQVYGYGTVDYERRPIVQWNAIYKKISLMEKPELGAASVLNQWEKAGRKLTKWELCRVVKELRKYKRANQALEVYDWMNNRGERFRLSASDAAIQLDLIGKVRGIPDAEEFFLQLPENFKDRRVYGSLLNAYVRAKSREKAEALLNTMRDKGYALHPLPFNVMMTLYMNLREYDKVDAMVFEMKQKDIRLDIYSYNIWLSSCGSLGSVEKMELVYQQMKSDVSIYPNWTTFSTMATMYIKMGETEKAEDALRKVEARITGRNRIPYHYLLSLYGSLGNKKELYRVWHVYKSVVPSIPNLGYHALVSSLVRMGDIEGAEKVYEEWLPVKSSYDPRIPNLLMNAYVKNDQLETAEGLFDHMVEMGGKPSSSTWEILAVGHTRKRCISEALTCLRNAFSAEGSSNWRPKVLMLSGFFKLCEEESDVTSKEAVLELLRQSGDLEDKSYLALIDVDENRTVNNSEIDAHETDALLTQLQDDL</sequence>
<comment type="similarity">
    <text evidence="1">Belongs to the PPR family. P subfamily.</text>
</comment>
<comment type="online information" name="Pentatricopeptide repeat proteins">
    <link uri="https://ppr.plantenergy.uwa.edu.au"/>
</comment>
<name>PPR3_ARATH</name>
<keyword id="KW-1185">Reference proteome</keyword>
<keyword id="KW-0677">Repeat</keyword>
<accession>Q8LPS6</accession>
<accession>O23677</accession>
<dbReference type="EMBL" id="AC064879">
    <property type="status" value="NOT_ANNOTATED_CDS"/>
    <property type="molecule type" value="Genomic_DNA"/>
</dbReference>
<dbReference type="EMBL" id="U89959">
    <property type="protein sequence ID" value="AAC24372.1"/>
    <property type="molecule type" value="Genomic_DNA"/>
</dbReference>
<dbReference type="EMBL" id="CP002684">
    <property type="protein sequence ID" value="AEE27393.1"/>
    <property type="molecule type" value="Genomic_DNA"/>
</dbReference>
<dbReference type="EMBL" id="AY094410">
    <property type="protein sequence ID" value="AAM19786.1"/>
    <property type="molecule type" value="mRNA"/>
</dbReference>
<dbReference type="EMBL" id="BT005812">
    <property type="protein sequence ID" value="AAO64747.1"/>
    <property type="molecule type" value="mRNA"/>
</dbReference>
<dbReference type="RefSeq" id="NP_171717.2">
    <property type="nucleotide sequence ID" value="NM_100095.4"/>
</dbReference>
<dbReference type="SMR" id="Q8LPS6"/>
<dbReference type="BioGRID" id="24812">
    <property type="interactions" value="1"/>
</dbReference>
<dbReference type="FunCoup" id="Q8LPS6">
    <property type="interactions" value="830"/>
</dbReference>
<dbReference type="STRING" id="3702.Q8LPS6"/>
<dbReference type="PaxDb" id="3702-AT1G02150.1"/>
<dbReference type="ProteomicsDB" id="236587"/>
<dbReference type="EnsemblPlants" id="AT1G02150.1">
    <property type="protein sequence ID" value="AT1G02150.1"/>
    <property type="gene ID" value="AT1G02150"/>
</dbReference>
<dbReference type="GeneID" id="839577"/>
<dbReference type="Gramene" id="AT1G02150.1">
    <property type="protein sequence ID" value="AT1G02150.1"/>
    <property type="gene ID" value="AT1G02150"/>
</dbReference>
<dbReference type="KEGG" id="ath:AT1G02150"/>
<dbReference type="Araport" id="AT1G02150"/>
<dbReference type="TAIR" id="AT1G02150"/>
<dbReference type="eggNOG" id="KOG4197">
    <property type="taxonomic scope" value="Eukaryota"/>
</dbReference>
<dbReference type="HOGENOM" id="CLU_019802_3_0_1"/>
<dbReference type="InParanoid" id="Q8LPS6"/>
<dbReference type="OMA" id="YDPRICN"/>
<dbReference type="PhylomeDB" id="Q8LPS6"/>
<dbReference type="PRO" id="PR:Q8LPS6"/>
<dbReference type="Proteomes" id="UP000006548">
    <property type="component" value="Chromosome 1"/>
</dbReference>
<dbReference type="ExpressionAtlas" id="Q8LPS6">
    <property type="expression patterns" value="baseline and differential"/>
</dbReference>
<dbReference type="GO" id="GO:0009507">
    <property type="term" value="C:chloroplast"/>
    <property type="evidence" value="ECO:0007005"/>
    <property type="project" value="TAIR"/>
</dbReference>
<dbReference type="GO" id="GO:0003729">
    <property type="term" value="F:mRNA binding"/>
    <property type="evidence" value="ECO:0000314"/>
    <property type="project" value="TAIR"/>
</dbReference>
<dbReference type="FunFam" id="1.25.40.10:FF:000253">
    <property type="entry name" value="Pentatricopeptide repeat-containing protein"/>
    <property type="match status" value="1"/>
</dbReference>
<dbReference type="FunFam" id="1.25.40.10:FF:000516">
    <property type="entry name" value="Pentatricopeptide repeat-containing protein"/>
    <property type="match status" value="1"/>
</dbReference>
<dbReference type="FunFam" id="1.25.40.10:FF:000743">
    <property type="entry name" value="Pentatricopeptide repeat-containing protein"/>
    <property type="match status" value="1"/>
</dbReference>
<dbReference type="Gene3D" id="1.25.40.10">
    <property type="entry name" value="Tetratricopeptide repeat domain"/>
    <property type="match status" value="3"/>
</dbReference>
<dbReference type="InterPro" id="IPR002885">
    <property type="entry name" value="Pentatricopeptide_rpt"/>
</dbReference>
<dbReference type="InterPro" id="IPR011990">
    <property type="entry name" value="TPR-like_helical_dom_sf"/>
</dbReference>
<dbReference type="NCBIfam" id="TIGR00756">
    <property type="entry name" value="PPR"/>
    <property type="match status" value="3"/>
</dbReference>
<dbReference type="PANTHER" id="PTHR45717:SF3">
    <property type="entry name" value="OS04G0544400 PROTEIN"/>
    <property type="match status" value="1"/>
</dbReference>
<dbReference type="PANTHER" id="PTHR45717">
    <property type="entry name" value="OS12G0527900 PROTEIN"/>
    <property type="match status" value="1"/>
</dbReference>
<dbReference type="Pfam" id="PF01535">
    <property type="entry name" value="PPR"/>
    <property type="match status" value="3"/>
</dbReference>
<dbReference type="Pfam" id="PF13812">
    <property type="entry name" value="PPR_3"/>
    <property type="match status" value="1"/>
</dbReference>
<dbReference type="SUPFAM" id="SSF48452">
    <property type="entry name" value="TPR-like"/>
    <property type="match status" value="1"/>
</dbReference>
<dbReference type="PROSITE" id="PS51375">
    <property type="entry name" value="PPR"/>
    <property type="match status" value="7"/>
</dbReference>
<gene>
    <name type="ordered locus">At1g02150</name>
    <name type="ORF">T6A9.13</name>
    <name type="ORF">T7I23.8</name>
</gene>
<evidence type="ECO:0000305" key="1"/>
<proteinExistence type="evidence at transcript level"/>
<feature type="chain" id="PRO_0000342744" description="Pentatricopeptide repeat-containing protein At1g02150">
    <location>
        <begin position="1"/>
        <end position="524"/>
    </location>
</feature>
<feature type="repeat" description="PPR 1">
    <location>
        <begin position="168"/>
        <end position="202"/>
    </location>
</feature>
<feature type="repeat" description="PPR 2">
    <location>
        <begin position="203"/>
        <end position="237"/>
    </location>
</feature>
<feature type="repeat" description="PPR 3">
    <location>
        <begin position="238"/>
        <end position="268"/>
    </location>
</feature>
<feature type="repeat" description="PPR 4">
    <location>
        <begin position="274"/>
        <end position="304"/>
    </location>
</feature>
<feature type="repeat" description="PPR 5">
    <location>
        <begin position="309"/>
        <end position="339"/>
    </location>
</feature>
<feature type="repeat" description="PPR 6">
    <location>
        <begin position="344"/>
        <end position="378"/>
    </location>
</feature>
<feature type="repeat" description="PPR 7">
    <location>
        <begin position="379"/>
        <end position="413"/>
    </location>
</feature>
<feature type="sequence conflict" description="In Ref. 3; AAO64747/AAM19786." evidence="1" ref="3">
    <original>L</original>
    <variation>I</variation>
    <location>
        <position position="119"/>
    </location>
</feature>